<name>RIMM_GEOTN</name>
<keyword id="KW-0143">Chaperone</keyword>
<keyword id="KW-0963">Cytoplasm</keyword>
<keyword id="KW-0690">Ribosome biogenesis</keyword>
<keyword id="KW-0698">rRNA processing</keyword>
<feature type="chain" id="PRO_1000001177" description="Ribosome maturation factor RimM">
    <location>
        <begin position="1"/>
        <end position="175"/>
    </location>
</feature>
<feature type="domain" description="PRC barrel" evidence="1">
    <location>
        <begin position="100"/>
        <end position="173"/>
    </location>
</feature>
<reference key="1">
    <citation type="journal article" date="2007" name="Proc. Natl. Acad. Sci. U.S.A.">
        <title>Genome and proteome of long-chain alkane degrading Geobacillus thermodenitrificans NG80-2 isolated from a deep-subsurface oil reservoir.</title>
        <authorList>
            <person name="Feng L."/>
            <person name="Wang W."/>
            <person name="Cheng J."/>
            <person name="Ren Y."/>
            <person name="Zhao G."/>
            <person name="Gao C."/>
            <person name="Tang Y."/>
            <person name="Liu X."/>
            <person name="Han W."/>
            <person name="Peng X."/>
            <person name="Liu R."/>
            <person name="Wang L."/>
        </authorList>
    </citation>
    <scope>NUCLEOTIDE SEQUENCE [LARGE SCALE GENOMIC DNA]</scope>
    <source>
        <strain>NG80-2</strain>
    </source>
</reference>
<proteinExistence type="inferred from homology"/>
<evidence type="ECO:0000255" key="1">
    <source>
        <dbReference type="HAMAP-Rule" id="MF_00014"/>
    </source>
</evidence>
<organism>
    <name type="scientific">Geobacillus thermodenitrificans (strain NG80-2)</name>
    <dbReference type="NCBI Taxonomy" id="420246"/>
    <lineage>
        <taxon>Bacteria</taxon>
        <taxon>Bacillati</taxon>
        <taxon>Bacillota</taxon>
        <taxon>Bacilli</taxon>
        <taxon>Bacillales</taxon>
        <taxon>Anoxybacillaceae</taxon>
        <taxon>Geobacillus</taxon>
    </lineage>
</organism>
<accession>A4IM75</accession>
<comment type="function">
    <text evidence="1">An accessory protein needed during the final step in the assembly of 30S ribosomal subunit, possibly for assembly of the head region. Essential for efficient processing of 16S rRNA. May be needed both before and after RbfA during the maturation of 16S rRNA. It has affinity for free ribosomal 30S subunits but not for 70S ribosomes.</text>
</comment>
<comment type="subunit">
    <text evidence="1">Binds ribosomal protein uS19.</text>
</comment>
<comment type="subcellular location">
    <subcellularLocation>
        <location evidence="1">Cytoplasm</location>
    </subcellularLocation>
</comment>
<comment type="domain">
    <text evidence="1">The PRC barrel domain binds ribosomal protein uS19.</text>
</comment>
<comment type="similarity">
    <text evidence="1">Belongs to the RimM family.</text>
</comment>
<dbReference type="EMBL" id="CP000557">
    <property type="protein sequence ID" value="ABO66429.1"/>
    <property type="molecule type" value="Genomic_DNA"/>
</dbReference>
<dbReference type="SMR" id="A4IM75"/>
<dbReference type="KEGG" id="gtn:GTNG_1053"/>
<dbReference type="eggNOG" id="COG0806">
    <property type="taxonomic scope" value="Bacteria"/>
</dbReference>
<dbReference type="HOGENOM" id="CLU_077636_3_1_9"/>
<dbReference type="Proteomes" id="UP000001578">
    <property type="component" value="Chromosome"/>
</dbReference>
<dbReference type="GO" id="GO:0005737">
    <property type="term" value="C:cytoplasm"/>
    <property type="evidence" value="ECO:0007669"/>
    <property type="project" value="UniProtKB-SubCell"/>
</dbReference>
<dbReference type="GO" id="GO:0005840">
    <property type="term" value="C:ribosome"/>
    <property type="evidence" value="ECO:0007669"/>
    <property type="project" value="InterPro"/>
</dbReference>
<dbReference type="GO" id="GO:0043022">
    <property type="term" value="F:ribosome binding"/>
    <property type="evidence" value="ECO:0007669"/>
    <property type="project" value="InterPro"/>
</dbReference>
<dbReference type="GO" id="GO:0042274">
    <property type="term" value="P:ribosomal small subunit biogenesis"/>
    <property type="evidence" value="ECO:0007669"/>
    <property type="project" value="UniProtKB-UniRule"/>
</dbReference>
<dbReference type="GO" id="GO:0006364">
    <property type="term" value="P:rRNA processing"/>
    <property type="evidence" value="ECO:0007669"/>
    <property type="project" value="UniProtKB-UniRule"/>
</dbReference>
<dbReference type="Gene3D" id="2.30.30.240">
    <property type="entry name" value="PRC-barrel domain"/>
    <property type="match status" value="1"/>
</dbReference>
<dbReference type="Gene3D" id="2.40.30.60">
    <property type="entry name" value="RimM"/>
    <property type="match status" value="1"/>
</dbReference>
<dbReference type="HAMAP" id="MF_00014">
    <property type="entry name" value="Ribosome_mat_RimM"/>
    <property type="match status" value="1"/>
</dbReference>
<dbReference type="InterPro" id="IPR027275">
    <property type="entry name" value="PRC-brl_dom"/>
</dbReference>
<dbReference type="InterPro" id="IPR011033">
    <property type="entry name" value="PRC_barrel-like_sf"/>
</dbReference>
<dbReference type="InterPro" id="IPR011961">
    <property type="entry name" value="RimM"/>
</dbReference>
<dbReference type="InterPro" id="IPR002676">
    <property type="entry name" value="RimM_N"/>
</dbReference>
<dbReference type="InterPro" id="IPR036976">
    <property type="entry name" value="RimM_N_sf"/>
</dbReference>
<dbReference type="InterPro" id="IPR009000">
    <property type="entry name" value="Transl_B-barrel_sf"/>
</dbReference>
<dbReference type="NCBIfam" id="TIGR02273">
    <property type="entry name" value="16S_RimM"/>
    <property type="match status" value="1"/>
</dbReference>
<dbReference type="PANTHER" id="PTHR33692">
    <property type="entry name" value="RIBOSOME MATURATION FACTOR RIMM"/>
    <property type="match status" value="1"/>
</dbReference>
<dbReference type="PANTHER" id="PTHR33692:SF1">
    <property type="entry name" value="RIBOSOME MATURATION FACTOR RIMM"/>
    <property type="match status" value="1"/>
</dbReference>
<dbReference type="Pfam" id="PF05239">
    <property type="entry name" value="PRC"/>
    <property type="match status" value="1"/>
</dbReference>
<dbReference type="Pfam" id="PF01782">
    <property type="entry name" value="RimM"/>
    <property type="match status" value="1"/>
</dbReference>
<dbReference type="SUPFAM" id="SSF50346">
    <property type="entry name" value="PRC-barrel domain"/>
    <property type="match status" value="1"/>
</dbReference>
<dbReference type="SUPFAM" id="SSF50447">
    <property type="entry name" value="Translation proteins"/>
    <property type="match status" value="1"/>
</dbReference>
<gene>
    <name evidence="1" type="primary">rimM</name>
    <name type="ordered locus">GTNG_1053</name>
</gene>
<protein>
    <recommendedName>
        <fullName evidence="1">Ribosome maturation factor RimM</fullName>
    </recommendedName>
</protein>
<sequence length="175" mass="20169">MKVMERWFNVGKIVNTHGIRGEVRVISRTDFPEERYKKGNKLYIFRECDTEPIEVTVKSHRVHKSFDLLSFEGYDSINDVEPFKGAMLKVPESQLGELNEGEYYFHEIIDCTVVTEAGETIGKVKEILTPGANDVWVVRRQDGTDALIPYIDDVVMHVDPERKIIIIRPMEGLLE</sequence>